<gene>
    <name type="primary">Cyp313a2</name>
    <name type="ORF">CG10094</name>
</gene>
<keyword id="KW-0256">Endoplasmic reticulum</keyword>
<keyword id="KW-0349">Heme</keyword>
<keyword id="KW-0408">Iron</keyword>
<keyword id="KW-0472">Membrane</keyword>
<keyword id="KW-0479">Metal-binding</keyword>
<keyword id="KW-0492">Microsome</keyword>
<keyword id="KW-0503">Monooxygenase</keyword>
<keyword id="KW-0560">Oxidoreductase</keyword>
<keyword id="KW-1185">Reference proteome</keyword>
<protein>
    <recommendedName>
        <fullName>Probable cytochrome P450 313a2</fullName>
        <ecNumber>1.14.-.-</ecNumber>
    </recommendedName>
    <alternativeName>
        <fullName>CYPCCCXIIIA2</fullName>
    </alternativeName>
</protein>
<accession>Q9VGB4</accession>
<dbReference type="EC" id="1.14.-.-"/>
<dbReference type="EMBL" id="AE014297">
    <property type="protein sequence ID" value="AAF54769.4"/>
    <property type="molecule type" value="Genomic_DNA"/>
</dbReference>
<dbReference type="RefSeq" id="NP_650169.3">
    <property type="nucleotide sequence ID" value="NM_141912.3"/>
</dbReference>
<dbReference type="SMR" id="Q9VGB4"/>
<dbReference type="FunCoup" id="Q9VGB4">
    <property type="interactions" value="2"/>
</dbReference>
<dbReference type="IntAct" id="Q9VGB4">
    <property type="interactions" value="4"/>
</dbReference>
<dbReference type="STRING" id="7227.FBpp0300785"/>
<dbReference type="PaxDb" id="7227-FBpp0300785"/>
<dbReference type="EnsemblMetazoa" id="FBtr0308561">
    <property type="protein sequence ID" value="FBpp0300785"/>
    <property type="gene ID" value="FBgn0038006"/>
</dbReference>
<dbReference type="GeneID" id="41487"/>
<dbReference type="KEGG" id="dme:Dmel_CG10094"/>
<dbReference type="UCSC" id="CG10094-RA">
    <property type="organism name" value="d. melanogaster"/>
</dbReference>
<dbReference type="AGR" id="FB:FBgn0038006"/>
<dbReference type="CTD" id="41487"/>
<dbReference type="FlyBase" id="FBgn0038006">
    <property type="gene designation" value="Cyp313a2"/>
</dbReference>
<dbReference type="VEuPathDB" id="VectorBase:FBgn0038006"/>
<dbReference type="eggNOG" id="KOG0157">
    <property type="taxonomic scope" value="Eukaryota"/>
</dbReference>
<dbReference type="GeneTree" id="ENSGT00940000167150"/>
<dbReference type="HOGENOM" id="CLU_001570_5_1_1"/>
<dbReference type="InParanoid" id="Q9VGB4"/>
<dbReference type="OMA" id="FPEHQEM"/>
<dbReference type="OrthoDB" id="1470350at2759"/>
<dbReference type="PhylomeDB" id="Q9VGB4"/>
<dbReference type="SignaLink" id="Q9VGB4"/>
<dbReference type="BioGRID-ORCS" id="41487">
    <property type="hits" value="0 hits in 1 CRISPR screen"/>
</dbReference>
<dbReference type="GenomeRNAi" id="41487"/>
<dbReference type="PRO" id="PR:Q9VGB4"/>
<dbReference type="Proteomes" id="UP000000803">
    <property type="component" value="Chromosome 3R"/>
</dbReference>
<dbReference type="ExpressionAtlas" id="Q9VGB4">
    <property type="expression patterns" value="baseline and differential"/>
</dbReference>
<dbReference type="GO" id="GO:0005789">
    <property type="term" value="C:endoplasmic reticulum membrane"/>
    <property type="evidence" value="ECO:0007669"/>
    <property type="project" value="UniProtKB-SubCell"/>
</dbReference>
<dbReference type="GO" id="GO:0020037">
    <property type="term" value="F:heme binding"/>
    <property type="evidence" value="ECO:0007669"/>
    <property type="project" value="InterPro"/>
</dbReference>
<dbReference type="GO" id="GO:0005506">
    <property type="term" value="F:iron ion binding"/>
    <property type="evidence" value="ECO:0007669"/>
    <property type="project" value="InterPro"/>
</dbReference>
<dbReference type="GO" id="GO:0004497">
    <property type="term" value="F:monooxygenase activity"/>
    <property type="evidence" value="ECO:0007669"/>
    <property type="project" value="UniProtKB-KW"/>
</dbReference>
<dbReference type="GO" id="GO:0016705">
    <property type="term" value="F:oxidoreductase activity, acting on paired donors, with incorporation or reduction of molecular oxygen"/>
    <property type="evidence" value="ECO:0007669"/>
    <property type="project" value="InterPro"/>
</dbReference>
<dbReference type="CDD" id="cd11057">
    <property type="entry name" value="CYP313-like"/>
    <property type="match status" value="1"/>
</dbReference>
<dbReference type="Gene3D" id="1.10.630.10">
    <property type="entry name" value="Cytochrome P450"/>
    <property type="match status" value="1"/>
</dbReference>
<dbReference type="InterPro" id="IPR001128">
    <property type="entry name" value="Cyt_P450"/>
</dbReference>
<dbReference type="InterPro" id="IPR017972">
    <property type="entry name" value="Cyt_P450_CS"/>
</dbReference>
<dbReference type="InterPro" id="IPR002401">
    <property type="entry name" value="Cyt_P450_E_grp-I"/>
</dbReference>
<dbReference type="InterPro" id="IPR036396">
    <property type="entry name" value="Cyt_P450_sf"/>
</dbReference>
<dbReference type="InterPro" id="IPR050196">
    <property type="entry name" value="Cytochrome_P450_Monoox"/>
</dbReference>
<dbReference type="PANTHER" id="PTHR24291:SF189">
    <property type="entry name" value="CYTOCHROME P450 4C3-RELATED"/>
    <property type="match status" value="1"/>
</dbReference>
<dbReference type="PANTHER" id="PTHR24291">
    <property type="entry name" value="CYTOCHROME P450 FAMILY 4"/>
    <property type="match status" value="1"/>
</dbReference>
<dbReference type="Pfam" id="PF00067">
    <property type="entry name" value="p450"/>
    <property type="match status" value="1"/>
</dbReference>
<dbReference type="PRINTS" id="PR00463">
    <property type="entry name" value="EP450I"/>
</dbReference>
<dbReference type="PRINTS" id="PR00385">
    <property type="entry name" value="P450"/>
</dbReference>
<dbReference type="SUPFAM" id="SSF48264">
    <property type="entry name" value="Cytochrome P450"/>
    <property type="match status" value="1"/>
</dbReference>
<dbReference type="PROSITE" id="PS00086">
    <property type="entry name" value="CYTOCHROME_P450"/>
    <property type="match status" value="1"/>
</dbReference>
<sequence>MIVIQLLIAASLILWIRFLWSRRKLYMLMMQLPGRMGLPLLGNSVRYLIISRGRMSSRTTYMDKHGSTYMAWIGTTPIVITRDPKIAEKVLTSPFCINRSSQTTNALALSMGYGLLTLQGSKWMARRKHMNPAFKHSVLLSFLPIFNAETDLLVSVFDSFVGQGEKDVLSDLIRWSFAIATQTTLGTDVTKDDNFENDAILKTYQSMLRLTIINIFVPFVQNKIVSKLFGLEWLRRRDASAINKMINNILDKKLNSNPENYCESELKTVIHRAIELFRNDEMSLMELGAECSSMVLAAFETSAHTVYYALVLLAMFPEHQEMVFNEIKEHFPLAKGIEVTHTDLQQLVYLDRVLNETLRLMPSVPFSSRETLEDLRLSNGVVIPKGMTISIDIFNTQRNTDYWGSEAAQFNPENFLPEKIHDRHPYAFIPFSKGKRNCIGWRYGLMSSKLALVKILRNYKLKTSFPYENLEFVDHMVIKLAQSPQLAFERRTL</sequence>
<reference key="1">
    <citation type="journal article" date="2000" name="Science">
        <title>The genome sequence of Drosophila melanogaster.</title>
        <authorList>
            <person name="Adams M.D."/>
            <person name="Celniker S.E."/>
            <person name="Holt R.A."/>
            <person name="Evans C.A."/>
            <person name="Gocayne J.D."/>
            <person name="Amanatides P.G."/>
            <person name="Scherer S.E."/>
            <person name="Li P.W."/>
            <person name="Hoskins R.A."/>
            <person name="Galle R.F."/>
            <person name="George R.A."/>
            <person name="Lewis S.E."/>
            <person name="Richards S."/>
            <person name="Ashburner M."/>
            <person name="Henderson S.N."/>
            <person name="Sutton G.G."/>
            <person name="Wortman J.R."/>
            <person name="Yandell M.D."/>
            <person name="Zhang Q."/>
            <person name="Chen L.X."/>
            <person name="Brandon R.C."/>
            <person name="Rogers Y.-H.C."/>
            <person name="Blazej R.G."/>
            <person name="Champe M."/>
            <person name="Pfeiffer B.D."/>
            <person name="Wan K.H."/>
            <person name="Doyle C."/>
            <person name="Baxter E.G."/>
            <person name="Helt G."/>
            <person name="Nelson C.R."/>
            <person name="Miklos G.L.G."/>
            <person name="Abril J.F."/>
            <person name="Agbayani A."/>
            <person name="An H.-J."/>
            <person name="Andrews-Pfannkoch C."/>
            <person name="Baldwin D."/>
            <person name="Ballew R.M."/>
            <person name="Basu A."/>
            <person name="Baxendale J."/>
            <person name="Bayraktaroglu L."/>
            <person name="Beasley E.M."/>
            <person name="Beeson K.Y."/>
            <person name="Benos P.V."/>
            <person name="Berman B.P."/>
            <person name="Bhandari D."/>
            <person name="Bolshakov S."/>
            <person name="Borkova D."/>
            <person name="Botchan M.R."/>
            <person name="Bouck J."/>
            <person name="Brokstein P."/>
            <person name="Brottier P."/>
            <person name="Burtis K.C."/>
            <person name="Busam D.A."/>
            <person name="Butler H."/>
            <person name="Cadieu E."/>
            <person name="Center A."/>
            <person name="Chandra I."/>
            <person name="Cherry J.M."/>
            <person name="Cawley S."/>
            <person name="Dahlke C."/>
            <person name="Davenport L.B."/>
            <person name="Davies P."/>
            <person name="de Pablos B."/>
            <person name="Delcher A."/>
            <person name="Deng Z."/>
            <person name="Mays A.D."/>
            <person name="Dew I."/>
            <person name="Dietz S.M."/>
            <person name="Dodson K."/>
            <person name="Doup L.E."/>
            <person name="Downes M."/>
            <person name="Dugan-Rocha S."/>
            <person name="Dunkov B.C."/>
            <person name="Dunn P."/>
            <person name="Durbin K.J."/>
            <person name="Evangelista C.C."/>
            <person name="Ferraz C."/>
            <person name="Ferriera S."/>
            <person name="Fleischmann W."/>
            <person name="Fosler C."/>
            <person name="Gabrielian A.E."/>
            <person name="Garg N.S."/>
            <person name="Gelbart W.M."/>
            <person name="Glasser K."/>
            <person name="Glodek A."/>
            <person name="Gong F."/>
            <person name="Gorrell J.H."/>
            <person name="Gu Z."/>
            <person name="Guan P."/>
            <person name="Harris M."/>
            <person name="Harris N.L."/>
            <person name="Harvey D.A."/>
            <person name="Heiman T.J."/>
            <person name="Hernandez J.R."/>
            <person name="Houck J."/>
            <person name="Hostin D."/>
            <person name="Houston K.A."/>
            <person name="Howland T.J."/>
            <person name="Wei M.-H."/>
            <person name="Ibegwam C."/>
            <person name="Jalali M."/>
            <person name="Kalush F."/>
            <person name="Karpen G.H."/>
            <person name="Ke Z."/>
            <person name="Kennison J.A."/>
            <person name="Ketchum K.A."/>
            <person name="Kimmel B.E."/>
            <person name="Kodira C.D."/>
            <person name="Kraft C.L."/>
            <person name="Kravitz S."/>
            <person name="Kulp D."/>
            <person name="Lai Z."/>
            <person name="Lasko P."/>
            <person name="Lei Y."/>
            <person name="Levitsky A.A."/>
            <person name="Li J.H."/>
            <person name="Li Z."/>
            <person name="Liang Y."/>
            <person name="Lin X."/>
            <person name="Liu X."/>
            <person name="Mattei B."/>
            <person name="McIntosh T.C."/>
            <person name="McLeod M.P."/>
            <person name="McPherson D."/>
            <person name="Merkulov G."/>
            <person name="Milshina N.V."/>
            <person name="Mobarry C."/>
            <person name="Morris J."/>
            <person name="Moshrefi A."/>
            <person name="Mount S.M."/>
            <person name="Moy M."/>
            <person name="Murphy B."/>
            <person name="Murphy L."/>
            <person name="Muzny D.M."/>
            <person name="Nelson D.L."/>
            <person name="Nelson D.R."/>
            <person name="Nelson K.A."/>
            <person name="Nixon K."/>
            <person name="Nusskern D.R."/>
            <person name="Pacleb J.M."/>
            <person name="Palazzolo M."/>
            <person name="Pittman G.S."/>
            <person name="Pan S."/>
            <person name="Pollard J."/>
            <person name="Puri V."/>
            <person name="Reese M.G."/>
            <person name="Reinert K."/>
            <person name="Remington K."/>
            <person name="Saunders R.D.C."/>
            <person name="Scheeler F."/>
            <person name="Shen H."/>
            <person name="Shue B.C."/>
            <person name="Siden-Kiamos I."/>
            <person name="Simpson M."/>
            <person name="Skupski M.P."/>
            <person name="Smith T.J."/>
            <person name="Spier E."/>
            <person name="Spradling A.C."/>
            <person name="Stapleton M."/>
            <person name="Strong R."/>
            <person name="Sun E."/>
            <person name="Svirskas R."/>
            <person name="Tector C."/>
            <person name="Turner R."/>
            <person name="Venter E."/>
            <person name="Wang A.H."/>
            <person name="Wang X."/>
            <person name="Wang Z.-Y."/>
            <person name="Wassarman D.A."/>
            <person name="Weinstock G.M."/>
            <person name="Weissenbach J."/>
            <person name="Williams S.M."/>
            <person name="Woodage T."/>
            <person name="Worley K.C."/>
            <person name="Wu D."/>
            <person name="Yang S."/>
            <person name="Yao Q.A."/>
            <person name="Ye J."/>
            <person name="Yeh R.-F."/>
            <person name="Zaveri J.S."/>
            <person name="Zhan M."/>
            <person name="Zhang G."/>
            <person name="Zhao Q."/>
            <person name="Zheng L."/>
            <person name="Zheng X.H."/>
            <person name="Zhong F.N."/>
            <person name="Zhong W."/>
            <person name="Zhou X."/>
            <person name="Zhu S.C."/>
            <person name="Zhu X."/>
            <person name="Smith H.O."/>
            <person name="Gibbs R.A."/>
            <person name="Myers E.W."/>
            <person name="Rubin G.M."/>
            <person name="Venter J.C."/>
        </authorList>
    </citation>
    <scope>NUCLEOTIDE SEQUENCE [LARGE SCALE GENOMIC DNA]</scope>
    <source>
        <strain>Berkeley</strain>
    </source>
</reference>
<reference key="2">
    <citation type="journal article" date="2002" name="Genome Biol.">
        <title>Annotation of the Drosophila melanogaster euchromatic genome: a systematic review.</title>
        <authorList>
            <person name="Misra S."/>
            <person name="Crosby M.A."/>
            <person name="Mungall C.J."/>
            <person name="Matthews B.B."/>
            <person name="Campbell K.S."/>
            <person name="Hradecky P."/>
            <person name="Huang Y."/>
            <person name="Kaminker J.S."/>
            <person name="Millburn G.H."/>
            <person name="Prochnik S.E."/>
            <person name="Smith C.D."/>
            <person name="Tupy J.L."/>
            <person name="Whitfield E.J."/>
            <person name="Bayraktaroglu L."/>
            <person name="Berman B.P."/>
            <person name="Bettencourt B.R."/>
            <person name="Celniker S.E."/>
            <person name="de Grey A.D.N.J."/>
            <person name="Drysdale R.A."/>
            <person name="Harris N.L."/>
            <person name="Richter J."/>
            <person name="Russo S."/>
            <person name="Schroeder A.J."/>
            <person name="Shu S.Q."/>
            <person name="Stapleton M."/>
            <person name="Yamada C."/>
            <person name="Ashburner M."/>
            <person name="Gelbart W.M."/>
            <person name="Rubin G.M."/>
            <person name="Lewis S.E."/>
        </authorList>
    </citation>
    <scope>GENOME REANNOTATION</scope>
    <source>
        <strain>Berkeley</strain>
    </source>
</reference>
<proteinExistence type="inferred from homology"/>
<organism>
    <name type="scientific">Drosophila melanogaster</name>
    <name type="common">Fruit fly</name>
    <dbReference type="NCBI Taxonomy" id="7227"/>
    <lineage>
        <taxon>Eukaryota</taxon>
        <taxon>Metazoa</taxon>
        <taxon>Ecdysozoa</taxon>
        <taxon>Arthropoda</taxon>
        <taxon>Hexapoda</taxon>
        <taxon>Insecta</taxon>
        <taxon>Pterygota</taxon>
        <taxon>Neoptera</taxon>
        <taxon>Endopterygota</taxon>
        <taxon>Diptera</taxon>
        <taxon>Brachycera</taxon>
        <taxon>Muscomorpha</taxon>
        <taxon>Ephydroidea</taxon>
        <taxon>Drosophilidae</taxon>
        <taxon>Drosophila</taxon>
        <taxon>Sophophora</taxon>
    </lineage>
</organism>
<feature type="chain" id="PRO_0000052324" description="Probable cytochrome P450 313a2">
    <location>
        <begin position="1"/>
        <end position="493"/>
    </location>
</feature>
<feature type="binding site" description="axial binding residue" evidence="1">
    <location>
        <position position="438"/>
    </location>
    <ligand>
        <name>heme</name>
        <dbReference type="ChEBI" id="CHEBI:30413"/>
    </ligand>
    <ligandPart>
        <name>Fe</name>
        <dbReference type="ChEBI" id="CHEBI:18248"/>
    </ligandPart>
</feature>
<comment type="function">
    <text evidence="1">May be involved in the metabolism of insect hormones and in the breakdown of synthetic insecticides.</text>
</comment>
<comment type="cofactor">
    <cofactor evidence="1">
        <name>heme</name>
        <dbReference type="ChEBI" id="CHEBI:30413"/>
    </cofactor>
</comment>
<comment type="subcellular location">
    <subcellularLocation>
        <location evidence="2">Endoplasmic reticulum membrane</location>
        <topology evidence="2">Peripheral membrane protein</topology>
    </subcellularLocation>
    <subcellularLocation>
        <location evidence="2">Microsome membrane</location>
        <topology evidence="2">Peripheral membrane protein</topology>
    </subcellularLocation>
</comment>
<comment type="similarity">
    <text evidence="2">Belongs to the cytochrome P450 family.</text>
</comment>
<evidence type="ECO:0000250" key="1"/>
<evidence type="ECO:0000305" key="2"/>
<name>CP132_DROME</name>